<protein>
    <recommendedName>
        <fullName evidence="1">Dephospho-CoA kinase</fullName>
        <ecNumber evidence="1">2.7.1.24</ecNumber>
    </recommendedName>
    <alternativeName>
        <fullName evidence="1">Dephosphocoenzyme A kinase</fullName>
    </alternativeName>
</protein>
<name>COAE_CHLL3</name>
<keyword id="KW-0067">ATP-binding</keyword>
<keyword id="KW-0173">Coenzyme A biosynthesis</keyword>
<keyword id="KW-0963">Cytoplasm</keyword>
<keyword id="KW-0418">Kinase</keyword>
<keyword id="KW-0547">Nucleotide-binding</keyword>
<keyword id="KW-1185">Reference proteome</keyword>
<keyword id="KW-0808">Transferase</keyword>
<accession>Q3B3J7</accession>
<proteinExistence type="inferred from homology"/>
<organism>
    <name type="scientific">Chlorobium luteolum (strain DSM 273 / BCRC 81028 / 2530)</name>
    <name type="common">Pelodictyon luteolum</name>
    <dbReference type="NCBI Taxonomy" id="319225"/>
    <lineage>
        <taxon>Bacteria</taxon>
        <taxon>Pseudomonadati</taxon>
        <taxon>Chlorobiota</taxon>
        <taxon>Chlorobiia</taxon>
        <taxon>Chlorobiales</taxon>
        <taxon>Chlorobiaceae</taxon>
        <taxon>Chlorobium/Pelodictyon group</taxon>
        <taxon>Pelodictyon</taxon>
    </lineage>
</organism>
<feature type="chain" id="PRO_0000243314" description="Dephospho-CoA kinase">
    <location>
        <begin position="1"/>
        <end position="219"/>
    </location>
</feature>
<feature type="domain" description="DPCK" evidence="1">
    <location>
        <begin position="8"/>
        <end position="215"/>
    </location>
</feature>
<feature type="binding site" evidence="1">
    <location>
        <begin position="16"/>
        <end position="21"/>
    </location>
    <ligand>
        <name>ATP</name>
        <dbReference type="ChEBI" id="CHEBI:30616"/>
    </ligand>
</feature>
<dbReference type="EC" id="2.7.1.24" evidence="1"/>
<dbReference type="EMBL" id="CP000096">
    <property type="protein sequence ID" value="ABB24084.1"/>
    <property type="molecule type" value="Genomic_DNA"/>
</dbReference>
<dbReference type="RefSeq" id="WP_011357956.1">
    <property type="nucleotide sequence ID" value="NC_007512.1"/>
</dbReference>
<dbReference type="SMR" id="Q3B3J7"/>
<dbReference type="STRING" id="319225.Plut_1222"/>
<dbReference type="KEGG" id="plt:Plut_1222"/>
<dbReference type="eggNOG" id="COG0237">
    <property type="taxonomic scope" value="Bacteria"/>
</dbReference>
<dbReference type="HOGENOM" id="CLU_057180_3_1_10"/>
<dbReference type="OrthoDB" id="9812943at2"/>
<dbReference type="UniPathway" id="UPA00241">
    <property type="reaction ID" value="UER00356"/>
</dbReference>
<dbReference type="Proteomes" id="UP000002709">
    <property type="component" value="Chromosome"/>
</dbReference>
<dbReference type="GO" id="GO:0005737">
    <property type="term" value="C:cytoplasm"/>
    <property type="evidence" value="ECO:0007669"/>
    <property type="project" value="UniProtKB-SubCell"/>
</dbReference>
<dbReference type="GO" id="GO:0005524">
    <property type="term" value="F:ATP binding"/>
    <property type="evidence" value="ECO:0007669"/>
    <property type="project" value="UniProtKB-UniRule"/>
</dbReference>
<dbReference type="GO" id="GO:0004140">
    <property type="term" value="F:dephospho-CoA kinase activity"/>
    <property type="evidence" value="ECO:0007669"/>
    <property type="project" value="UniProtKB-UniRule"/>
</dbReference>
<dbReference type="GO" id="GO:0015937">
    <property type="term" value="P:coenzyme A biosynthetic process"/>
    <property type="evidence" value="ECO:0007669"/>
    <property type="project" value="UniProtKB-UniRule"/>
</dbReference>
<dbReference type="CDD" id="cd02022">
    <property type="entry name" value="DPCK"/>
    <property type="match status" value="1"/>
</dbReference>
<dbReference type="Gene3D" id="3.40.50.300">
    <property type="entry name" value="P-loop containing nucleotide triphosphate hydrolases"/>
    <property type="match status" value="1"/>
</dbReference>
<dbReference type="HAMAP" id="MF_00376">
    <property type="entry name" value="Dephospho_CoA_kinase"/>
    <property type="match status" value="1"/>
</dbReference>
<dbReference type="InterPro" id="IPR001977">
    <property type="entry name" value="Depp_CoAkinase"/>
</dbReference>
<dbReference type="InterPro" id="IPR027417">
    <property type="entry name" value="P-loop_NTPase"/>
</dbReference>
<dbReference type="NCBIfam" id="TIGR00152">
    <property type="entry name" value="dephospho-CoA kinase"/>
    <property type="match status" value="1"/>
</dbReference>
<dbReference type="PANTHER" id="PTHR10695:SF46">
    <property type="entry name" value="BIFUNCTIONAL COENZYME A SYNTHASE-RELATED"/>
    <property type="match status" value="1"/>
</dbReference>
<dbReference type="PANTHER" id="PTHR10695">
    <property type="entry name" value="DEPHOSPHO-COA KINASE-RELATED"/>
    <property type="match status" value="1"/>
</dbReference>
<dbReference type="Pfam" id="PF01121">
    <property type="entry name" value="CoaE"/>
    <property type="match status" value="1"/>
</dbReference>
<dbReference type="SUPFAM" id="SSF52540">
    <property type="entry name" value="P-loop containing nucleoside triphosphate hydrolases"/>
    <property type="match status" value="1"/>
</dbReference>
<dbReference type="PROSITE" id="PS51219">
    <property type="entry name" value="DPCK"/>
    <property type="match status" value="1"/>
</dbReference>
<comment type="function">
    <text evidence="1">Catalyzes the phosphorylation of the 3'-hydroxyl group of dephosphocoenzyme A to form coenzyme A.</text>
</comment>
<comment type="catalytic activity">
    <reaction evidence="1">
        <text>3'-dephospho-CoA + ATP = ADP + CoA + H(+)</text>
        <dbReference type="Rhea" id="RHEA:18245"/>
        <dbReference type="ChEBI" id="CHEBI:15378"/>
        <dbReference type="ChEBI" id="CHEBI:30616"/>
        <dbReference type="ChEBI" id="CHEBI:57287"/>
        <dbReference type="ChEBI" id="CHEBI:57328"/>
        <dbReference type="ChEBI" id="CHEBI:456216"/>
        <dbReference type="EC" id="2.7.1.24"/>
    </reaction>
</comment>
<comment type="pathway">
    <text evidence="1">Cofactor biosynthesis; coenzyme A biosynthesis; CoA from (R)-pantothenate: step 5/5.</text>
</comment>
<comment type="subcellular location">
    <subcellularLocation>
        <location evidence="1">Cytoplasm</location>
    </subcellularLocation>
</comment>
<comment type="similarity">
    <text evidence="1">Belongs to the CoaE family.</text>
</comment>
<evidence type="ECO:0000255" key="1">
    <source>
        <dbReference type="HAMAP-Rule" id="MF_00376"/>
    </source>
</evidence>
<reference key="1">
    <citation type="submission" date="2005-08" db="EMBL/GenBank/DDBJ databases">
        <title>Complete sequence of Pelodictyon luteolum DSM 273.</title>
        <authorList>
            <consortium name="US DOE Joint Genome Institute"/>
            <person name="Copeland A."/>
            <person name="Lucas S."/>
            <person name="Lapidus A."/>
            <person name="Barry K."/>
            <person name="Detter J.C."/>
            <person name="Glavina T."/>
            <person name="Hammon N."/>
            <person name="Israni S."/>
            <person name="Pitluck S."/>
            <person name="Bryant D."/>
            <person name="Schmutz J."/>
            <person name="Larimer F."/>
            <person name="Land M."/>
            <person name="Kyrpides N."/>
            <person name="Ivanova N."/>
            <person name="Richardson P."/>
        </authorList>
    </citation>
    <scope>NUCLEOTIDE SEQUENCE [LARGE SCALE GENOMIC DNA]</scope>
    <source>
        <strain>DSM 273 / BCRC 81028 / 2530</strain>
    </source>
</reference>
<gene>
    <name evidence="1" type="primary">coaE</name>
    <name type="ordered locus">Plut_1222</name>
</gene>
<sequence length="219" mass="24093">MTPSHPFLVGVTGGIGSGKSTLCRFLEKMGCELFEADKVARQLQVSDPEIMEGIKSLFGKDVYSKTRSGKLSLDRKRIAREVFSHPATLGALNNLIHPKVYNAFRQRALEAFGRGTAILVMEAAILFETGRAADLDFVVVVAADTETRIKRAVTRGLGTPEDIRKRIALQWPQEMLVARADYVVNNDIGKTKLKEEAGRLYSVLVEAAASGPDCQSKRR</sequence>